<evidence type="ECO:0000255" key="1">
    <source>
        <dbReference type="HAMAP-Rule" id="MF_00176"/>
    </source>
</evidence>
<evidence type="ECO:0000256" key="2">
    <source>
        <dbReference type="SAM" id="MobiDB-lite"/>
    </source>
</evidence>
<sequence length="430" mass="47682">MLDPKCLRSDIEQTAKRLAARGFNLDVAAFSSLEEKRKTLQSRTQDLQNERNVRSKSIGKAKAQGEDIAPLLAEVGKLGDELDAAKAELSELLEEINTLTQGIPNLPHESVPEGKDEDDNVEISRWGEPRTFDFEVKDHVDVAEGLNNGLDFATASKLTGSRFVVMRGDIARLNRALAQFMLDTHTQEHGYQEMYVPYLVNADSLYGTGQLPKFGEDLFHTKPATEEGQGLSLIPTAEVPLTNIARDEILDAKTLPVKMTAHTPCFRSEAGSYGRDTRGLIRQHQFDKVELVQLVKPEDSFDALEALTGHAEVILQKLELPYRKVLLCTGDMGFGACKTYDLEVWLPAQNTYREISSCSNMLDFQARRMQARFRNPETNKPELLHTLNGSGLAVGRTLVAILENNQQADGSVTVPKALVPYMAGQEVIKA</sequence>
<reference key="1">
    <citation type="journal article" date="2008" name="ISME J.">
        <title>Comparative genomics of two ecotypes of the marine planktonic copiotroph Alteromonas macleodii suggests alternative lifestyles associated with different kinds of particulate organic matter.</title>
        <authorList>
            <person name="Ivars-Martinez E."/>
            <person name="Martin-Cuadrado A.-B."/>
            <person name="D'Auria G."/>
            <person name="Mira A."/>
            <person name="Ferriera S."/>
            <person name="Johnson J."/>
            <person name="Friedman R."/>
            <person name="Rodriguez-Valera F."/>
        </authorList>
    </citation>
    <scope>NUCLEOTIDE SEQUENCE [LARGE SCALE GENOMIC DNA]</scope>
    <source>
        <strain>DSM 17117 / CIP 110805 / LMG 28347 / Deep ecotype</strain>
    </source>
</reference>
<proteinExistence type="inferred from homology"/>
<accession>B4RZU0</accession>
<accession>F2G3A5</accession>
<feature type="chain" id="PRO_1000098030" description="Serine--tRNA ligase">
    <location>
        <begin position="1"/>
        <end position="430"/>
    </location>
</feature>
<feature type="region of interest" description="Disordered" evidence="2">
    <location>
        <begin position="41"/>
        <end position="60"/>
    </location>
</feature>
<feature type="binding site" evidence="1">
    <location>
        <begin position="236"/>
        <end position="238"/>
    </location>
    <ligand>
        <name>L-serine</name>
        <dbReference type="ChEBI" id="CHEBI:33384"/>
    </ligand>
</feature>
<feature type="binding site" evidence="1">
    <location>
        <begin position="267"/>
        <end position="269"/>
    </location>
    <ligand>
        <name>ATP</name>
        <dbReference type="ChEBI" id="CHEBI:30616"/>
    </ligand>
</feature>
<feature type="binding site" evidence="1">
    <location>
        <position position="290"/>
    </location>
    <ligand>
        <name>L-serine</name>
        <dbReference type="ChEBI" id="CHEBI:33384"/>
    </ligand>
</feature>
<feature type="binding site" evidence="1">
    <location>
        <begin position="354"/>
        <end position="357"/>
    </location>
    <ligand>
        <name>ATP</name>
        <dbReference type="ChEBI" id="CHEBI:30616"/>
    </ligand>
</feature>
<feature type="binding site" evidence="1">
    <location>
        <position position="390"/>
    </location>
    <ligand>
        <name>L-serine</name>
        <dbReference type="ChEBI" id="CHEBI:33384"/>
    </ligand>
</feature>
<keyword id="KW-0030">Aminoacyl-tRNA synthetase</keyword>
<keyword id="KW-0067">ATP-binding</keyword>
<keyword id="KW-0963">Cytoplasm</keyword>
<keyword id="KW-0436">Ligase</keyword>
<keyword id="KW-0547">Nucleotide-binding</keyword>
<keyword id="KW-0648">Protein biosynthesis</keyword>
<comment type="function">
    <text evidence="1">Catalyzes the attachment of serine to tRNA(Ser). Is also able to aminoacylate tRNA(Sec) with serine, to form the misacylated tRNA L-seryl-tRNA(Sec), which will be further converted into selenocysteinyl-tRNA(Sec).</text>
</comment>
<comment type="catalytic activity">
    <reaction evidence="1">
        <text>tRNA(Ser) + L-serine + ATP = L-seryl-tRNA(Ser) + AMP + diphosphate + H(+)</text>
        <dbReference type="Rhea" id="RHEA:12292"/>
        <dbReference type="Rhea" id="RHEA-COMP:9669"/>
        <dbReference type="Rhea" id="RHEA-COMP:9703"/>
        <dbReference type="ChEBI" id="CHEBI:15378"/>
        <dbReference type="ChEBI" id="CHEBI:30616"/>
        <dbReference type="ChEBI" id="CHEBI:33019"/>
        <dbReference type="ChEBI" id="CHEBI:33384"/>
        <dbReference type="ChEBI" id="CHEBI:78442"/>
        <dbReference type="ChEBI" id="CHEBI:78533"/>
        <dbReference type="ChEBI" id="CHEBI:456215"/>
        <dbReference type="EC" id="6.1.1.11"/>
    </reaction>
</comment>
<comment type="catalytic activity">
    <reaction evidence="1">
        <text>tRNA(Sec) + L-serine + ATP = L-seryl-tRNA(Sec) + AMP + diphosphate + H(+)</text>
        <dbReference type="Rhea" id="RHEA:42580"/>
        <dbReference type="Rhea" id="RHEA-COMP:9742"/>
        <dbReference type="Rhea" id="RHEA-COMP:10128"/>
        <dbReference type="ChEBI" id="CHEBI:15378"/>
        <dbReference type="ChEBI" id="CHEBI:30616"/>
        <dbReference type="ChEBI" id="CHEBI:33019"/>
        <dbReference type="ChEBI" id="CHEBI:33384"/>
        <dbReference type="ChEBI" id="CHEBI:78442"/>
        <dbReference type="ChEBI" id="CHEBI:78533"/>
        <dbReference type="ChEBI" id="CHEBI:456215"/>
        <dbReference type="EC" id="6.1.1.11"/>
    </reaction>
</comment>
<comment type="pathway">
    <text evidence="1">Aminoacyl-tRNA biosynthesis; selenocysteinyl-tRNA(Sec) biosynthesis; L-seryl-tRNA(Sec) from L-serine and tRNA(Sec): step 1/1.</text>
</comment>
<comment type="subunit">
    <text evidence="1">Homodimer. The tRNA molecule binds across the dimer.</text>
</comment>
<comment type="subcellular location">
    <subcellularLocation>
        <location evidence="1">Cytoplasm</location>
    </subcellularLocation>
</comment>
<comment type="domain">
    <text evidence="1">Consists of two distinct domains, a catalytic core and a N-terminal extension that is involved in tRNA binding.</text>
</comment>
<comment type="similarity">
    <text evidence="1">Belongs to the class-II aminoacyl-tRNA synthetase family. Type-1 seryl-tRNA synthetase subfamily.</text>
</comment>
<gene>
    <name evidence="1" type="primary">serS</name>
    <name type="ordered locus">MADE_1010695</name>
</gene>
<name>SYS_ALTMD</name>
<organism>
    <name type="scientific">Alteromonas mediterranea (strain DSM 17117 / CIP 110805 / LMG 28347 / Deep ecotype)</name>
    <dbReference type="NCBI Taxonomy" id="1774373"/>
    <lineage>
        <taxon>Bacteria</taxon>
        <taxon>Pseudomonadati</taxon>
        <taxon>Pseudomonadota</taxon>
        <taxon>Gammaproteobacteria</taxon>
        <taxon>Alteromonadales</taxon>
        <taxon>Alteromonadaceae</taxon>
        <taxon>Alteromonas/Salinimonas group</taxon>
        <taxon>Alteromonas</taxon>
    </lineage>
</organism>
<dbReference type="EC" id="6.1.1.11" evidence="1"/>
<dbReference type="EMBL" id="CP001103">
    <property type="protein sequence ID" value="AEA98277.1"/>
    <property type="molecule type" value="Genomic_DNA"/>
</dbReference>
<dbReference type="RefSeq" id="WP_012518600.1">
    <property type="nucleotide sequence ID" value="NC_011138.3"/>
</dbReference>
<dbReference type="SMR" id="B4RZU0"/>
<dbReference type="KEGG" id="amc:MADE_1010695"/>
<dbReference type="HOGENOM" id="CLU_023797_1_1_6"/>
<dbReference type="UniPathway" id="UPA00906">
    <property type="reaction ID" value="UER00895"/>
</dbReference>
<dbReference type="Proteomes" id="UP000001870">
    <property type="component" value="Chromosome"/>
</dbReference>
<dbReference type="GO" id="GO:0005737">
    <property type="term" value="C:cytoplasm"/>
    <property type="evidence" value="ECO:0007669"/>
    <property type="project" value="UniProtKB-SubCell"/>
</dbReference>
<dbReference type="GO" id="GO:0005524">
    <property type="term" value="F:ATP binding"/>
    <property type="evidence" value="ECO:0007669"/>
    <property type="project" value="UniProtKB-UniRule"/>
</dbReference>
<dbReference type="GO" id="GO:0004828">
    <property type="term" value="F:serine-tRNA ligase activity"/>
    <property type="evidence" value="ECO:0007669"/>
    <property type="project" value="UniProtKB-UniRule"/>
</dbReference>
<dbReference type="GO" id="GO:0016260">
    <property type="term" value="P:selenocysteine biosynthetic process"/>
    <property type="evidence" value="ECO:0007669"/>
    <property type="project" value="UniProtKB-UniRule"/>
</dbReference>
<dbReference type="GO" id="GO:0006434">
    <property type="term" value="P:seryl-tRNA aminoacylation"/>
    <property type="evidence" value="ECO:0007669"/>
    <property type="project" value="UniProtKB-UniRule"/>
</dbReference>
<dbReference type="CDD" id="cd00770">
    <property type="entry name" value="SerRS_core"/>
    <property type="match status" value="1"/>
</dbReference>
<dbReference type="Gene3D" id="3.30.930.10">
    <property type="entry name" value="Bira Bifunctional Protein, Domain 2"/>
    <property type="match status" value="1"/>
</dbReference>
<dbReference type="Gene3D" id="1.10.287.40">
    <property type="entry name" value="Serine-tRNA synthetase, tRNA binding domain"/>
    <property type="match status" value="1"/>
</dbReference>
<dbReference type="HAMAP" id="MF_00176">
    <property type="entry name" value="Ser_tRNA_synth_type1"/>
    <property type="match status" value="1"/>
</dbReference>
<dbReference type="InterPro" id="IPR002314">
    <property type="entry name" value="aa-tRNA-synt_IIb"/>
</dbReference>
<dbReference type="InterPro" id="IPR006195">
    <property type="entry name" value="aa-tRNA-synth_II"/>
</dbReference>
<dbReference type="InterPro" id="IPR045864">
    <property type="entry name" value="aa-tRNA-synth_II/BPL/LPL"/>
</dbReference>
<dbReference type="InterPro" id="IPR002317">
    <property type="entry name" value="Ser-tRNA-ligase_type_1"/>
</dbReference>
<dbReference type="InterPro" id="IPR015866">
    <property type="entry name" value="Ser-tRNA-synth_1_N"/>
</dbReference>
<dbReference type="InterPro" id="IPR042103">
    <property type="entry name" value="SerRS_1_N_sf"/>
</dbReference>
<dbReference type="InterPro" id="IPR033729">
    <property type="entry name" value="SerRS_core"/>
</dbReference>
<dbReference type="InterPro" id="IPR010978">
    <property type="entry name" value="tRNA-bd_arm"/>
</dbReference>
<dbReference type="NCBIfam" id="TIGR00414">
    <property type="entry name" value="serS"/>
    <property type="match status" value="1"/>
</dbReference>
<dbReference type="PANTHER" id="PTHR43697:SF1">
    <property type="entry name" value="SERINE--TRNA LIGASE"/>
    <property type="match status" value="1"/>
</dbReference>
<dbReference type="PANTHER" id="PTHR43697">
    <property type="entry name" value="SERYL-TRNA SYNTHETASE"/>
    <property type="match status" value="1"/>
</dbReference>
<dbReference type="Pfam" id="PF02403">
    <property type="entry name" value="Seryl_tRNA_N"/>
    <property type="match status" value="1"/>
</dbReference>
<dbReference type="Pfam" id="PF00587">
    <property type="entry name" value="tRNA-synt_2b"/>
    <property type="match status" value="1"/>
</dbReference>
<dbReference type="PIRSF" id="PIRSF001529">
    <property type="entry name" value="Ser-tRNA-synth_IIa"/>
    <property type="match status" value="1"/>
</dbReference>
<dbReference type="PRINTS" id="PR00981">
    <property type="entry name" value="TRNASYNTHSER"/>
</dbReference>
<dbReference type="SUPFAM" id="SSF55681">
    <property type="entry name" value="Class II aaRS and biotin synthetases"/>
    <property type="match status" value="1"/>
</dbReference>
<dbReference type="SUPFAM" id="SSF46589">
    <property type="entry name" value="tRNA-binding arm"/>
    <property type="match status" value="1"/>
</dbReference>
<dbReference type="PROSITE" id="PS50862">
    <property type="entry name" value="AA_TRNA_LIGASE_II"/>
    <property type="match status" value="1"/>
</dbReference>
<protein>
    <recommendedName>
        <fullName evidence="1">Serine--tRNA ligase</fullName>
        <ecNumber evidence="1">6.1.1.11</ecNumber>
    </recommendedName>
    <alternativeName>
        <fullName evidence="1">Seryl-tRNA synthetase</fullName>
        <shortName evidence="1">SerRS</shortName>
    </alternativeName>
    <alternativeName>
        <fullName evidence="1">Seryl-tRNA(Ser/Sec) synthetase</fullName>
    </alternativeName>
</protein>